<name>TAL_ACIC1</name>
<gene>
    <name evidence="1" type="primary">tal</name>
    <name type="ordered locus">Acel_1126</name>
</gene>
<keyword id="KW-0963">Cytoplasm</keyword>
<keyword id="KW-0570">Pentose shunt</keyword>
<keyword id="KW-1185">Reference proteome</keyword>
<keyword id="KW-0704">Schiff base</keyword>
<keyword id="KW-0808">Transferase</keyword>
<sequence length="372" mass="40947">MTDPLAELSAAGVSIWIDDISRDRLQTGNLAALIRDRHVVGVTTNPTIFGKAIEGSARYQDQLRDLAVRGVDVNEALRALTAYDVRWACDVTRPVFDATDGVDGRVSIEVDPRLAHDTEATIAEARALWWLVDRPNLFIKIPATVEGLPAIAQCLAEGISVNVTLIFSVKRYEQVIDAFFDGVERAIEAGHDLSRLASVASFFVSRVDTEVDKRLEKIGGEALQWKAKAAVANARLAYRTYEEKFATPRWQALAAKGARPQRPLWASTSTKDPSLPDTLYVTELVAPGTVNTMPESTLQAVYDHGVIRGDTIRGYYADAQATLDALATLGIDYDDVTDTLEREGVEKFEASWTELAAAVTRSLERARRERGR</sequence>
<dbReference type="EC" id="2.2.1.2" evidence="1"/>
<dbReference type="EMBL" id="CP000481">
    <property type="protein sequence ID" value="ABK52898.1"/>
    <property type="molecule type" value="Genomic_DNA"/>
</dbReference>
<dbReference type="RefSeq" id="WP_011719961.1">
    <property type="nucleotide sequence ID" value="NC_008578.1"/>
</dbReference>
<dbReference type="SMR" id="A0LTY8"/>
<dbReference type="FunCoup" id="A0LTY8">
    <property type="interactions" value="150"/>
</dbReference>
<dbReference type="STRING" id="351607.Acel_1126"/>
<dbReference type="KEGG" id="ace:Acel_1126"/>
<dbReference type="eggNOG" id="COG0176">
    <property type="taxonomic scope" value="Bacteria"/>
</dbReference>
<dbReference type="HOGENOM" id="CLU_050771_1_0_11"/>
<dbReference type="InParanoid" id="A0LTY8"/>
<dbReference type="OrthoDB" id="9809101at2"/>
<dbReference type="UniPathway" id="UPA00115">
    <property type="reaction ID" value="UER00414"/>
</dbReference>
<dbReference type="Proteomes" id="UP000008221">
    <property type="component" value="Chromosome"/>
</dbReference>
<dbReference type="GO" id="GO:0005737">
    <property type="term" value="C:cytoplasm"/>
    <property type="evidence" value="ECO:0007669"/>
    <property type="project" value="UniProtKB-SubCell"/>
</dbReference>
<dbReference type="GO" id="GO:0004801">
    <property type="term" value="F:transaldolase activity"/>
    <property type="evidence" value="ECO:0007669"/>
    <property type="project" value="UniProtKB-UniRule"/>
</dbReference>
<dbReference type="GO" id="GO:0005975">
    <property type="term" value="P:carbohydrate metabolic process"/>
    <property type="evidence" value="ECO:0007669"/>
    <property type="project" value="InterPro"/>
</dbReference>
<dbReference type="GO" id="GO:0006098">
    <property type="term" value="P:pentose-phosphate shunt"/>
    <property type="evidence" value="ECO:0007669"/>
    <property type="project" value="UniProtKB-UniRule"/>
</dbReference>
<dbReference type="CDD" id="cd00955">
    <property type="entry name" value="Transaldolase_like"/>
    <property type="match status" value="1"/>
</dbReference>
<dbReference type="Gene3D" id="3.20.20.70">
    <property type="entry name" value="Aldolase class I"/>
    <property type="match status" value="1"/>
</dbReference>
<dbReference type="HAMAP" id="MF_00493">
    <property type="entry name" value="Transaldolase_2"/>
    <property type="match status" value="1"/>
</dbReference>
<dbReference type="InterPro" id="IPR013785">
    <property type="entry name" value="Aldolase_TIM"/>
</dbReference>
<dbReference type="InterPro" id="IPR001585">
    <property type="entry name" value="TAL/FSA"/>
</dbReference>
<dbReference type="InterPro" id="IPR004732">
    <property type="entry name" value="Transaldolase_2"/>
</dbReference>
<dbReference type="InterPro" id="IPR018225">
    <property type="entry name" value="Transaldolase_AS"/>
</dbReference>
<dbReference type="NCBIfam" id="NF002881">
    <property type="entry name" value="PRK03343.1"/>
    <property type="match status" value="1"/>
</dbReference>
<dbReference type="NCBIfam" id="TIGR00876">
    <property type="entry name" value="tal_mycobact"/>
    <property type="match status" value="1"/>
</dbReference>
<dbReference type="PANTHER" id="PTHR10683">
    <property type="entry name" value="TRANSALDOLASE"/>
    <property type="match status" value="1"/>
</dbReference>
<dbReference type="PANTHER" id="PTHR10683:SF31">
    <property type="entry name" value="TRANSALDOLASE"/>
    <property type="match status" value="1"/>
</dbReference>
<dbReference type="Pfam" id="PF00923">
    <property type="entry name" value="TAL_FSA"/>
    <property type="match status" value="1"/>
</dbReference>
<dbReference type="PIRSF" id="PIRSF036915">
    <property type="entry name" value="Trnald_Bac_Plnt"/>
    <property type="match status" value="1"/>
</dbReference>
<dbReference type="SUPFAM" id="SSF51569">
    <property type="entry name" value="Aldolase"/>
    <property type="match status" value="1"/>
</dbReference>
<dbReference type="PROSITE" id="PS01054">
    <property type="entry name" value="TRANSALDOLASE_1"/>
    <property type="match status" value="1"/>
</dbReference>
<proteinExistence type="inferred from homology"/>
<organism>
    <name type="scientific">Acidothermus cellulolyticus (strain ATCC 43068 / DSM 8971 / 11B)</name>
    <dbReference type="NCBI Taxonomy" id="351607"/>
    <lineage>
        <taxon>Bacteria</taxon>
        <taxon>Bacillati</taxon>
        <taxon>Actinomycetota</taxon>
        <taxon>Actinomycetes</taxon>
        <taxon>Acidothermales</taxon>
        <taxon>Acidothermaceae</taxon>
        <taxon>Acidothermus</taxon>
    </lineage>
</organism>
<protein>
    <recommendedName>
        <fullName evidence="1">Transaldolase</fullName>
        <ecNumber evidence="1">2.2.1.2</ecNumber>
    </recommendedName>
</protein>
<evidence type="ECO:0000255" key="1">
    <source>
        <dbReference type="HAMAP-Rule" id="MF_00493"/>
    </source>
</evidence>
<feature type="chain" id="PRO_1000026519" description="Transaldolase">
    <location>
        <begin position="1"/>
        <end position="372"/>
    </location>
</feature>
<feature type="active site" description="Schiff-base intermediate with substrate" evidence="1">
    <location>
        <position position="140"/>
    </location>
</feature>
<accession>A0LTY8</accession>
<comment type="function">
    <text evidence="1">Transaldolase is important for the balance of metabolites in the pentose-phosphate pathway.</text>
</comment>
<comment type="catalytic activity">
    <reaction evidence="1">
        <text>D-sedoheptulose 7-phosphate + D-glyceraldehyde 3-phosphate = D-erythrose 4-phosphate + beta-D-fructose 6-phosphate</text>
        <dbReference type="Rhea" id="RHEA:17053"/>
        <dbReference type="ChEBI" id="CHEBI:16897"/>
        <dbReference type="ChEBI" id="CHEBI:57483"/>
        <dbReference type="ChEBI" id="CHEBI:57634"/>
        <dbReference type="ChEBI" id="CHEBI:59776"/>
        <dbReference type="EC" id="2.2.1.2"/>
    </reaction>
</comment>
<comment type="pathway">
    <text evidence="1">Carbohydrate degradation; pentose phosphate pathway; D-glyceraldehyde 3-phosphate and beta-D-fructose 6-phosphate from D-ribose 5-phosphate and D-xylulose 5-phosphate (non-oxidative stage): step 2/3.</text>
</comment>
<comment type="subcellular location">
    <subcellularLocation>
        <location evidence="1">Cytoplasm</location>
    </subcellularLocation>
</comment>
<comment type="similarity">
    <text evidence="1">Belongs to the transaldolase family. Type 2 subfamily.</text>
</comment>
<reference key="1">
    <citation type="journal article" date="2009" name="Genome Res.">
        <title>Complete genome of the cellulolytic thermophile Acidothermus cellulolyticus 11B provides insights into its ecophysiological and evolutionary adaptations.</title>
        <authorList>
            <person name="Barabote R.D."/>
            <person name="Xie G."/>
            <person name="Leu D.H."/>
            <person name="Normand P."/>
            <person name="Necsulea A."/>
            <person name="Daubin V."/>
            <person name="Medigue C."/>
            <person name="Adney W.S."/>
            <person name="Xu X.C."/>
            <person name="Lapidus A."/>
            <person name="Parales R.E."/>
            <person name="Detter C."/>
            <person name="Pujic P."/>
            <person name="Bruce D."/>
            <person name="Lavire C."/>
            <person name="Challacombe J.F."/>
            <person name="Brettin T.S."/>
            <person name="Berry A.M."/>
        </authorList>
    </citation>
    <scope>NUCLEOTIDE SEQUENCE [LARGE SCALE GENOMIC DNA]</scope>
    <source>
        <strain>ATCC 43068 / DSM 8971 / 11B</strain>
    </source>
</reference>